<proteinExistence type="evidence at protein level"/>
<accession>O43013</accession>
<sequence>MSFNPAAGLLGKLKKLWNDTKNDYLEWERSQQGQISESVVKNHSPSKRKRRPSKEPSLSPKRRKNILNDQKKDEESIPNAGTQSQNFTHLSASKIRISDEDRIKPLVDLNQDHSFDMAYLTPASAPPPRFRFVPPKSDAKSHSAPRSLEGVTSLSDSHFNSLEANLKAISKDSNNKAHNNRYDESSLTNPEFSILVERLKSIEENLQSLQERISHCERSVSLSPSFAPPSNVKSPVQQHRSFVSSSARAKKNWGRQSNSPNSNKKTDHAYPGASMNTERGLIQNLEDSDDIHEESSDTLEEPLLINELNRTSFLNSNNNLKLNEAEENQNLLNLRSPKSSGKADNLTIKSSSNIDKVTSNDLYLDNNLQSHFKVTESQPTNLGRKEYSNSPFSIRARKDAATTSSSFESYHNTQTIQSPMKFTKATPLKDNESASVDESKVNVLSENQSLQADTATLEQLTPIPKARWNQLANKHPSLSNSAASPPVSSPGLRRSHIPVHEGLKHTRDGVAETKDALAKLREKMQERLKNHTS</sequence>
<feature type="chain" id="PRO_0000303931" description="Uncharacterized protein C2G2.14">
    <location>
        <begin position="1"/>
        <end position="533"/>
    </location>
</feature>
<feature type="region of interest" description="Disordered" evidence="1">
    <location>
        <begin position="30"/>
        <end position="92"/>
    </location>
</feature>
<feature type="region of interest" description="Disordered" evidence="1">
    <location>
        <begin position="221"/>
        <end position="274"/>
    </location>
</feature>
<feature type="region of interest" description="Disordered" evidence="1">
    <location>
        <begin position="475"/>
        <end position="510"/>
    </location>
</feature>
<feature type="compositionally biased region" description="Polar residues" evidence="1">
    <location>
        <begin position="30"/>
        <end position="43"/>
    </location>
</feature>
<feature type="compositionally biased region" description="Polar residues" evidence="1">
    <location>
        <begin position="79"/>
        <end position="91"/>
    </location>
</feature>
<feature type="compositionally biased region" description="Polar residues" evidence="1">
    <location>
        <begin position="231"/>
        <end position="247"/>
    </location>
</feature>
<feature type="compositionally biased region" description="Polar residues" evidence="1">
    <location>
        <begin position="254"/>
        <end position="263"/>
    </location>
</feature>
<feature type="compositionally biased region" description="Low complexity" evidence="1">
    <location>
        <begin position="476"/>
        <end position="490"/>
    </location>
</feature>
<feature type="compositionally biased region" description="Basic and acidic residues" evidence="1">
    <location>
        <begin position="498"/>
        <end position="510"/>
    </location>
</feature>
<feature type="modified residue" description="Phosphoserine" evidence="3">
    <location>
        <position position="336"/>
    </location>
</feature>
<dbReference type="EMBL" id="CU329671">
    <property type="protein sequence ID" value="CAA17894.1"/>
    <property type="molecule type" value="Genomic_DNA"/>
</dbReference>
<dbReference type="PIR" id="T40153">
    <property type="entry name" value="T40153"/>
</dbReference>
<dbReference type="SMR" id="O43013"/>
<dbReference type="BioGRID" id="276812">
    <property type="interactions" value="32"/>
</dbReference>
<dbReference type="STRING" id="284812.O43013"/>
<dbReference type="iPTMnet" id="O43013"/>
<dbReference type="SwissPalm" id="O43013"/>
<dbReference type="PaxDb" id="4896-SPBC2G2.14.1"/>
<dbReference type="EnsemblFungi" id="SPBC2G2.14.1">
    <property type="protein sequence ID" value="SPBC2G2.14.1:pep"/>
    <property type="gene ID" value="SPBC2G2.14"/>
</dbReference>
<dbReference type="KEGG" id="spo:2540281"/>
<dbReference type="PomBase" id="SPBC2G2.14"/>
<dbReference type="VEuPathDB" id="FungiDB:SPBC2G2.14"/>
<dbReference type="HOGENOM" id="CLU_511063_0_0_1"/>
<dbReference type="InParanoid" id="O43013"/>
<dbReference type="OMA" id="NEYLEWE"/>
<dbReference type="PRO" id="PR:O43013"/>
<dbReference type="Proteomes" id="UP000002485">
    <property type="component" value="Chromosome II"/>
</dbReference>
<dbReference type="GO" id="GO:0000779">
    <property type="term" value="C:condensed chromosome, centromeric region"/>
    <property type="evidence" value="ECO:0000314"/>
    <property type="project" value="PomBase"/>
</dbReference>
<dbReference type="GO" id="GO:0035974">
    <property type="term" value="C:meiotic spindle pole body"/>
    <property type="evidence" value="ECO:0000269"/>
    <property type="project" value="PomBase"/>
</dbReference>
<dbReference type="GO" id="GO:0097431">
    <property type="term" value="C:mitotic spindle pole"/>
    <property type="evidence" value="ECO:0000314"/>
    <property type="project" value="PomBase"/>
</dbReference>
<dbReference type="GO" id="GO:0044732">
    <property type="term" value="C:mitotic spindle pole body"/>
    <property type="evidence" value="ECO:0000314"/>
    <property type="project" value="PomBase"/>
</dbReference>
<dbReference type="GO" id="GO:0005635">
    <property type="term" value="C:nuclear envelope"/>
    <property type="evidence" value="ECO:0000314"/>
    <property type="project" value="PomBase"/>
</dbReference>
<dbReference type="GO" id="GO:0005634">
    <property type="term" value="C:nucleus"/>
    <property type="evidence" value="ECO:0007005"/>
    <property type="project" value="PomBase"/>
</dbReference>
<dbReference type="GO" id="GO:0030674">
    <property type="term" value="F:protein-macromolecule adaptor activity"/>
    <property type="evidence" value="ECO:0000315"/>
    <property type="project" value="PomBase"/>
</dbReference>
<dbReference type="GO" id="GO:0072766">
    <property type="term" value="P:centromere clustering at the mitotic interphase nuclear envelope"/>
    <property type="evidence" value="ECO:0000315"/>
    <property type="project" value="PomBase"/>
</dbReference>
<dbReference type="GO" id="GO:0000070">
    <property type="term" value="P:mitotic sister chromatid segregation"/>
    <property type="evidence" value="ECO:0000303"/>
    <property type="project" value="PomBase"/>
</dbReference>
<evidence type="ECO:0000256" key="1">
    <source>
        <dbReference type="SAM" id="MobiDB-lite"/>
    </source>
</evidence>
<evidence type="ECO:0000269" key="2">
    <source>
    </source>
</evidence>
<evidence type="ECO:0000269" key="3">
    <source>
    </source>
</evidence>
<keyword id="KW-0539">Nucleus</keyword>
<keyword id="KW-0597">Phosphoprotein</keyword>
<keyword id="KW-1185">Reference proteome</keyword>
<name>YBOE_SCHPO</name>
<protein>
    <recommendedName>
        <fullName>Uncharacterized protein C2G2.14</fullName>
    </recommendedName>
</protein>
<comment type="subcellular location">
    <subcellularLocation>
        <location evidence="2">Nucleus</location>
    </subcellularLocation>
</comment>
<organism>
    <name type="scientific">Schizosaccharomyces pombe (strain 972 / ATCC 24843)</name>
    <name type="common">Fission yeast</name>
    <dbReference type="NCBI Taxonomy" id="284812"/>
    <lineage>
        <taxon>Eukaryota</taxon>
        <taxon>Fungi</taxon>
        <taxon>Dikarya</taxon>
        <taxon>Ascomycota</taxon>
        <taxon>Taphrinomycotina</taxon>
        <taxon>Schizosaccharomycetes</taxon>
        <taxon>Schizosaccharomycetales</taxon>
        <taxon>Schizosaccharomycetaceae</taxon>
        <taxon>Schizosaccharomyces</taxon>
    </lineage>
</organism>
<gene>
    <name type="ORF">SPBC2G2.14</name>
</gene>
<reference key="1">
    <citation type="journal article" date="2002" name="Nature">
        <title>The genome sequence of Schizosaccharomyces pombe.</title>
        <authorList>
            <person name="Wood V."/>
            <person name="Gwilliam R."/>
            <person name="Rajandream M.A."/>
            <person name="Lyne M.H."/>
            <person name="Lyne R."/>
            <person name="Stewart A."/>
            <person name="Sgouros J.G."/>
            <person name="Peat N."/>
            <person name="Hayles J."/>
            <person name="Baker S.G."/>
            <person name="Basham D."/>
            <person name="Bowman S."/>
            <person name="Brooks K."/>
            <person name="Brown D."/>
            <person name="Brown S."/>
            <person name="Chillingworth T."/>
            <person name="Churcher C.M."/>
            <person name="Collins M."/>
            <person name="Connor R."/>
            <person name="Cronin A."/>
            <person name="Davis P."/>
            <person name="Feltwell T."/>
            <person name="Fraser A."/>
            <person name="Gentles S."/>
            <person name="Goble A."/>
            <person name="Hamlin N."/>
            <person name="Harris D.E."/>
            <person name="Hidalgo J."/>
            <person name="Hodgson G."/>
            <person name="Holroyd S."/>
            <person name="Hornsby T."/>
            <person name="Howarth S."/>
            <person name="Huckle E.J."/>
            <person name="Hunt S."/>
            <person name="Jagels K."/>
            <person name="James K.D."/>
            <person name="Jones L."/>
            <person name="Jones M."/>
            <person name="Leather S."/>
            <person name="McDonald S."/>
            <person name="McLean J."/>
            <person name="Mooney P."/>
            <person name="Moule S."/>
            <person name="Mungall K.L."/>
            <person name="Murphy L.D."/>
            <person name="Niblett D."/>
            <person name="Odell C."/>
            <person name="Oliver K."/>
            <person name="O'Neil S."/>
            <person name="Pearson D."/>
            <person name="Quail M.A."/>
            <person name="Rabbinowitsch E."/>
            <person name="Rutherford K.M."/>
            <person name="Rutter S."/>
            <person name="Saunders D."/>
            <person name="Seeger K."/>
            <person name="Sharp S."/>
            <person name="Skelton J."/>
            <person name="Simmonds M.N."/>
            <person name="Squares R."/>
            <person name="Squares S."/>
            <person name="Stevens K."/>
            <person name="Taylor K."/>
            <person name="Taylor R.G."/>
            <person name="Tivey A."/>
            <person name="Walsh S.V."/>
            <person name="Warren T."/>
            <person name="Whitehead S."/>
            <person name="Woodward J.R."/>
            <person name="Volckaert G."/>
            <person name="Aert R."/>
            <person name="Robben J."/>
            <person name="Grymonprez B."/>
            <person name="Weltjens I."/>
            <person name="Vanstreels E."/>
            <person name="Rieger M."/>
            <person name="Schaefer M."/>
            <person name="Mueller-Auer S."/>
            <person name="Gabel C."/>
            <person name="Fuchs M."/>
            <person name="Duesterhoeft A."/>
            <person name="Fritzc C."/>
            <person name="Holzer E."/>
            <person name="Moestl D."/>
            <person name="Hilbert H."/>
            <person name="Borzym K."/>
            <person name="Langer I."/>
            <person name="Beck A."/>
            <person name="Lehrach H."/>
            <person name="Reinhardt R."/>
            <person name="Pohl T.M."/>
            <person name="Eger P."/>
            <person name="Zimmermann W."/>
            <person name="Wedler H."/>
            <person name="Wambutt R."/>
            <person name="Purnelle B."/>
            <person name="Goffeau A."/>
            <person name="Cadieu E."/>
            <person name="Dreano S."/>
            <person name="Gloux S."/>
            <person name="Lelaure V."/>
            <person name="Mottier S."/>
            <person name="Galibert F."/>
            <person name="Aves S.J."/>
            <person name="Xiang Z."/>
            <person name="Hunt C."/>
            <person name="Moore K."/>
            <person name="Hurst S.M."/>
            <person name="Lucas M."/>
            <person name="Rochet M."/>
            <person name="Gaillardin C."/>
            <person name="Tallada V.A."/>
            <person name="Garzon A."/>
            <person name="Thode G."/>
            <person name="Daga R.R."/>
            <person name="Cruzado L."/>
            <person name="Jimenez J."/>
            <person name="Sanchez M."/>
            <person name="del Rey F."/>
            <person name="Benito J."/>
            <person name="Dominguez A."/>
            <person name="Revuelta J.L."/>
            <person name="Moreno S."/>
            <person name="Armstrong J."/>
            <person name="Forsburg S.L."/>
            <person name="Cerutti L."/>
            <person name="Lowe T."/>
            <person name="McCombie W.R."/>
            <person name="Paulsen I."/>
            <person name="Potashkin J."/>
            <person name="Shpakovski G.V."/>
            <person name="Ussery D."/>
            <person name="Barrell B.G."/>
            <person name="Nurse P."/>
        </authorList>
    </citation>
    <scope>NUCLEOTIDE SEQUENCE [LARGE SCALE GENOMIC DNA]</scope>
    <source>
        <strain>972 / ATCC 24843</strain>
    </source>
</reference>
<reference key="2">
    <citation type="journal article" date="2006" name="Nat. Biotechnol.">
        <title>ORFeome cloning and global analysis of protein localization in the fission yeast Schizosaccharomyces pombe.</title>
        <authorList>
            <person name="Matsuyama A."/>
            <person name="Arai R."/>
            <person name="Yashiroda Y."/>
            <person name="Shirai A."/>
            <person name="Kamata A."/>
            <person name="Sekido S."/>
            <person name="Kobayashi Y."/>
            <person name="Hashimoto A."/>
            <person name="Hamamoto M."/>
            <person name="Hiraoka Y."/>
            <person name="Horinouchi S."/>
            <person name="Yoshida M."/>
        </authorList>
    </citation>
    <scope>SUBCELLULAR LOCATION [LARGE SCALE ANALYSIS]</scope>
</reference>
<reference key="3">
    <citation type="journal article" date="2008" name="J. Proteome Res.">
        <title>Phosphoproteome analysis of fission yeast.</title>
        <authorList>
            <person name="Wilson-Grady J.T."/>
            <person name="Villen J."/>
            <person name="Gygi S.P."/>
        </authorList>
    </citation>
    <scope>PHOSPHORYLATION [LARGE SCALE ANALYSIS] AT SER-336</scope>
    <scope>IDENTIFICATION BY MASS SPECTROMETRY</scope>
</reference>